<reference key="1">
    <citation type="journal article" date="2005" name="Nature">
        <title>The DNA sequence of the human X chromosome.</title>
        <authorList>
            <person name="Ross M.T."/>
            <person name="Grafham D.V."/>
            <person name="Coffey A.J."/>
            <person name="Scherer S."/>
            <person name="McLay K."/>
            <person name="Muzny D."/>
            <person name="Platzer M."/>
            <person name="Howell G.R."/>
            <person name="Burrows C."/>
            <person name="Bird C.P."/>
            <person name="Frankish A."/>
            <person name="Lovell F.L."/>
            <person name="Howe K.L."/>
            <person name="Ashurst J.L."/>
            <person name="Fulton R.S."/>
            <person name="Sudbrak R."/>
            <person name="Wen G."/>
            <person name="Jones M.C."/>
            <person name="Hurles M.E."/>
            <person name="Andrews T.D."/>
            <person name="Scott C.E."/>
            <person name="Searle S."/>
            <person name="Ramser J."/>
            <person name="Whittaker A."/>
            <person name="Deadman R."/>
            <person name="Carter N.P."/>
            <person name="Hunt S.E."/>
            <person name="Chen R."/>
            <person name="Cree A."/>
            <person name="Gunaratne P."/>
            <person name="Havlak P."/>
            <person name="Hodgson A."/>
            <person name="Metzker M.L."/>
            <person name="Richards S."/>
            <person name="Scott G."/>
            <person name="Steffen D."/>
            <person name="Sodergren E."/>
            <person name="Wheeler D.A."/>
            <person name="Worley K.C."/>
            <person name="Ainscough R."/>
            <person name="Ambrose K.D."/>
            <person name="Ansari-Lari M.A."/>
            <person name="Aradhya S."/>
            <person name="Ashwell R.I."/>
            <person name="Babbage A.K."/>
            <person name="Bagguley C.L."/>
            <person name="Ballabio A."/>
            <person name="Banerjee R."/>
            <person name="Barker G.E."/>
            <person name="Barlow K.F."/>
            <person name="Barrett I.P."/>
            <person name="Bates K.N."/>
            <person name="Beare D.M."/>
            <person name="Beasley H."/>
            <person name="Beasley O."/>
            <person name="Beck A."/>
            <person name="Bethel G."/>
            <person name="Blechschmidt K."/>
            <person name="Brady N."/>
            <person name="Bray-Allen S."/>
            <person name="Bridgeman A.M."/>
            <person name="Brown A.J."/>
            <person name="Brown M.J."/>
            <person name="Bonnin D."/>
            <person name="Bruford E.A."/>
            <person name="Buhay C."/>
            <person name="Burch P."/>
            <person name="Burford D."/>
            <person name="Burgess J."/>
            <person name="Burrill W."/>
            <person name="Burton J."/>
            <person name="Bye J.M."/>
            <person name="Carder C."/>
            <person name="Carrel L."/>
            <person name="Chako J."/>
            <person name="Chapman J.C."/>
            <person name="Chavez D."/>
            <person name="Chen E."/>
            <person name="Chen G."/>
            <person name="Chen Y."/>
            <person name="Chen Z."/>
            <person name="Chinault C."/>
            <person name="Ciccodicola A."/>
            <person name="Clark S.Y."/>
            <person name="Clarke G."/>
            <person name="Clee C.M."/>
            <person name="Clegg S."/>
            <person name="Clerc-Blankenburg K."/>
            <person name="Clifford K."/>
            <person name="Cobley V."/>
            <person name="Cole C.G."/>
            <person name="Conquer J.S."/>
            <person name="Corby N."/>
            <person name="Connor R.E."/>
            <person name="David R."/>
            <person name="Davies J."/>
            <person name="Davis C."/>
            <person name="Davis J."/>
            <person name="Delgado O."/>
            <person name="Deshazo D."/>
            <person name="Dhami P."/>
            <person name="Ding Y."/>
            <person name="Dinh H."/>
            <person name="Dodsworth S."/>
            <person name="Draper H."/>
            <person name="Dugan-Rocha S."/>
            <person name="Dunham A."/>
            <person name="Dunn M."/>
            <person name="Durbin K.J."/>
            <person name="Dutta I."/>
            <person name="Eades T."/>
            <person name="Ellwood M."/>
            <person name="Emery-Cohen A."/>
            <person name="Errington H."/>
            <person name="Evans K.L."/>
            <person name="Faulkner L."/>
            <person name="Francis F."/>
            <person name="Frankland J."/>
            <person name="Fraser A.E."/>
            <person name="Galgoczy P."/>
            <person name="Gilbert J."/>
            <person name="Gill R."/>
            <person name="Gloeckner G."/>
            <person name="Gregory S.G."/>
            <person name="Gribble S."/>
            <person name="Griffiths C."/>
            <person name="Grocock R."/>
            <person name="Gu Y."/>
            <person name="Gwilliam R."/>
            <person name="Hamilton C."/>
            <person name="Hart E.A."/>
            <person name="Hawes A."/>
            <person name="Heath P.D."/>
            <person name="Heitmann K."/>
            <person name="Hennig S."/>
            <person name="Hernandez J."/>
            <person name="Hinzmann B."/>
            <person name="Ho S."/>
            <person name="Hoffs M."/>
            <person name="Howden P.J."/>
            <person name="Huckle E.J."/>
            <person name="Hume J."/>
            <person name="Hunt P.J."/>
            <person name="Hunt A.R."/>
            <person name="Isherwood J."/>
            <person name="Jacob L."/>
            <person name="Johnson D."/>
            <person name="Jones S."/>
            <person name="de Jong P.J."/>
            <person name="Joseph S.S."/>
            <person name="Keenan S."/>
            <person name="Kelly S."/>
            <person name="Kershaw J.K."/>
            <person name="Khan Z."/>
            <person name="Kioschis P."/>
            <person name="Klages S."/>
            <person name="Knights A.J."/>
            <person name="Kosiura A."/>
            <person name="Kovar-Smith C."/>
            <person name="Laird G.K."/>
            <person name="Langford C."/>
            <person name="Lawlor S."/>
            <person name="Leversha M."/>
            <person name="Lewis L."/>
            <person name="Liu W."/>
            <person name="Lloyd C."/>
            <person name="Lloyd D.M."/>
            <person name="Loulseged H."/>
            <person name="Loveland J.E."/>
            <person name="Lovell J.D."/>
            <person name="Lozado R."/>
            <person name="Lu J."/>
            <person name="Lyne R."/>
            <person name="Ma J."/>
            <person name="Maheshwari M."/>
            <person name="Matthews L.H."/>
            <person name="McDowall J."/>
            <person name="McLaren S."/>
            <person name="McMurray A."/>
            <person name="Meidl P."/>
            <person name="Meitinger T."/>
            <person name="Milne S."/>
            <person name="Miner G."/>
            <person name="Mistry S.L."/>
            <person name="Morgan M."/>
            <person name="Morris S."/>
            <person name="Mueller I."/>
            <person name="Mullikin J.C."/>
            <person name="Nguyen N."/>
            <person name="Nordsiek G."/>
            <person name="Nyakatura G."/>
            <person name="O'dell C.N."/>
            <person name="Okwuonu G."/>
            <person name="Palmer S."/>
            <person name="Pandian R."/>
            <person name="Parker D."/>
            <person name="Parrish J."/>
            <person name="Pasternak S."/>
            <person name="Patel D."/>
            <person name="Pearce A.V."/>
            <person name="Pearson D.M."/>
            <person name="Pelan S.E."/>
            <person name="Perez L."/>
            <person name="Porter K.M."/>
            <person name="Ramsey Y."/>
            <person name="Reichwald K."/>
            <person name="Rhodes S."/>
            <person name="Ridler K.A."/>
            <person name="Schlessinger D."/>
            <person name="Schueler M.G."/>
            <person name="Sehra H.K."/>
            <person name="Shaw-Smith C."/>
            <person name="Shen H."/>
            <person name="Sheridan E.M."/>
            <person name="Shownkeen R."/>
            <person name="Skuce C.D."/>
            <person name="Smith M.L."/>
            <person name="Sotheran E.C."/>
            <person name="Steingruber H.E."/>
            <person name="Steward C.A."/>
            <person name="Storey R."/>
            <person name="Swann R.M."/>
            <person name="Swarbreck D."/>
            <person name="Tabor P.E."/>
            <person name="Taudien S."/>
            <person name="Taylor T."/>
            <person name="Teague B."/>
            <person name="Thomas K."/>
            <person name="Thorpe A."/>
            <person name="Timms K."/>
            <person name="Tracey A."/>
            <person name="Trevanion S."/>
            <person name="Tromans A.C."/>
            <person name="d'Urso M."/>
            <person name="Verduzco D."/>
            <person name="Villasana D."/>
            <person name="Waldron L."/>
            <person name="Wall M."/>
            <person name="Wang Q."/>
            <person name="Warren J."/>
            <person name="Warry G.L."/>
            <person name="Wei X."/>
            <person name="West A."/>
            <person name="Whitehead S.L."/>
            <person name="Whiteley M.N."/>
            <person name="Wilkinson J.E."/>
            <person name="Willey D.L."/>
            <person name="Williams G."/>
            <person name="Williams L."/>
            <person name="Williamson A."/>
            <person name="Williamson H."/>
            <person name="Wilming L."/>
            <person name="Woodmansey R.L."/>
            <person name="Wray P.W."/>
            <person name="Yen J."/>
            <person name="Zhang J."/>
            <person name="Zhou J."/>
            <person name="Zoghbi H."/>
            <person name="Zorilla S."/>
            <person name="Buck D."/>
            <person name="Reinhardt R."/>
            <person name="Poustka A."/>
            <person name="Rosenthal A."/>
            <person name="Lehrach H."/>
            <person name="Meindl A."/>
            <person name="Minx P.J."/>
            <person name="Hillier L.W."/>
            <person name="Willard H.F."/>
            <person name="Wilson R.K."/>
            <person name="Waterston R.H."/>
            <person name="Rice C.M."/>
            <person name="Vaudin M."/>
            <person name="Coulson A."/>
            <person name="Nelson D.L."/>
            <person name="Weinstock G."/>
            <person name="Sulston J.E."/>
            <person name="Durbin R.M."/>
            <person name="Hubbard T."/>
            <person name="Gibbs R.A."/>
            <person name="Beck S."/>
            <person name="Rogers J."/>
            <person name="Bentley D.R."/>
        </authorList>
    </citation>
    <scope>NUCLEOTIDE SEQUENCE [LARGE SCALE GENOMIC DNA]</scope>
</reference>
<feature type="chain" id="PRO_0000433232" description="Small integral membrane protein 10-like protein 2A">
    <location>
        <begin position="1"/>
        <end position="78"/>
    </location>
</feature>
<evidence type="ECO:0000305" key="1"/>
<evidence type="ECO:0000312" key="2">
    <source>
        <dbReference type="HGNC" id="HGNC:34499"/>
    </source>
</evidence>
<proteinExistence type="predicted"/>
<gene>
    <name evidence="2" type="primary">SMIM10L2A</name>
    <name evidence="2" type="synonym">LINC00086</name>
    <name evidence="2" type="synonym">NCRNA00086</name>
</gene>
<accession>P0DMW4</accession>
<dbReference type="EMBL" id="AL450472">
    <property type="status" value="NOT_ANNOTATED_CDS"/>
    <property type="molecule type" value="Genomic_DNA"/>
</dbReference>
<dbReference type="RefSeq" id="NP_001335184.1">
    <property type="nucleotide sequence ID" value="NM_001348255.1"/>
</dbReference>
<dbReference type="RefSeq" id="NP_976051.1">
    <property type="nucleotide sequence ID" value="NM_203306.3"/>
</dbReference>
<dbReference type="SMR" id="P0DMW4"/>
<dbReference type="FunCoup" id="P0DMW4">
    <property type="interactions" value="1"/>
</dbReference>
<dbReference type="STRING" id="9606.ENSP00000487709"/>
<dbReference type="BioMuta" id="SMIM10L2A"/>
<dbReference type="MassIVE" id="P0DMW4"/>
<dbReference type="PeptideAtlas" id="P0DMW4"/>
<dbReference type="Pumba" id="P0DMW4"/>
<dbReference type="DNASU" id="399668"/>
<dbReference type="Ensembl" id="ENST00000417443.3">
    <property type="protein sequence ID" value="ENSP00000488643.1"/>
    <property type="gene ID" value="ENSG00000178947.9"/>
</dbReference>
<dbReference type="GeneID" id="399668"/>
<dbReference type="GeneID" id="644596"/>
<dbReference type="KEGG" id="hsa:399668"/>
<dbReference type="KEGG" id="hsa:644596"/>
<dbReference type="MANE-Select" id="ENST00000417443.3">
    <property type="protein sequence ID" value="ENSP00000488643.1"/>
    <property type="RefSeq nucleotide sequence ID" value="NM_203306.3"/>
    <property type="RefSeq protein sequence ID" value="NP_976051.1"/>
</dbReference>
<dbReference type="AGR" id="HGNC:34499"/>
<dbReference type="AGR" id="HGNC:34500"/>
<dbReference type="CTD" id="399668"/>
<dbReference type="CTD" id="644596"/>
<dbReference type="DisGeNET" id="399668"/>
<dbReference type="DisGeNET" id="644596"/>
<dbReference type="GeneCards" id="SMIM10L2A"/>
<dbReference type="HGNC" id="HGNC:34499">
    <property type="gene designation" value="SMIM10L2A"/>
</dbReference>
<dbReference type="HPA" id="ENSG00000178947">
    <property type="expression patterns" value="Group enriched (adrenal gland, brain, epididymis)"/>
</dbReference>
<dbReference type="neXtProt" id="NX_P0DMW4"/>
<dbReference type="OpenTargets" id="ENSG00000178947"/>
<dbReference type="OpenTargets" id="ENSG00000196972"/>
<dbReference type="VEuPathDB" id="HostDB:ENSG00000178947"/>
<dbReference type="InParanoid" id="P0DMW4"/>
<dbReference type="OMA" id="LMNFPLI"/>
<dbReference type="OrthoDB" id="9536825at2759"/>
<dbReference type="PAN-GO" id="P0DMW4">
    <property type="GO annotations" value="0 GO annotations based on evolutionary models"/>
</dbReference>
<dbReference type="PathwayCommons" id="P0DMW4"/>
<dbReference type="SignaLink" id="P0DMW4"/>
<dbReference type="BioGRID-ORCS" id="399668">
    <property type="hits" value="0 hits in 1 CRISPR screen"/>
</dbReference>
<dbReference type="BioGRID-ORCS" id="644596">
    <property type="hits" value="0 hits in 1 CRISPR screen"/>
</dbReference>
<dbReference type="Pharos" id="P0DMW4">
    <property type="development level" value="Tdark"/>
</dbReference>
<dbReference type="PRO" id="PR:P0DMW4"/>
<dbReference type="Proteomes" id="UP000005640">
    <property type="component" value="Chromosome X"/>
</dbReference>
<dbReference type="RNAct" id="P0DMW4">
    <property type="molecule type" value="protein"/>
</dbReference>
<dbReference type="Bgee" id="ENSG00000178947">
    <property type="expression patterns" value="Expressed in adrenal tissue and 120 other cell types or tissues"/>
</dbReference>
<dbReference type="InterPro" id="IPR029367">
    <property type="entry name" value="SMIM10"/>
</dbReference>
<dbReference type="PANTHER" id="PTHR34446">
    <property type="entry name" value="SMALL INTEGRAL MEMBRANE PROTEIN 10"/>
    <property type="match status" value="1"/>
</dbReference>
<dbReference type="PANTHER" id="PTHR34446:SF3">
    <property type="entry name" value="SMALL INTEGRAL MEMBRANE PROTEIN 10-LIKE PROTEIN 2A-RELATED"/>
    <property type="match status" value="1"/>
</dbReference>
<dbReference type="Pfam" id="PF15118">
    <property type="entry name" value="DUF4560"/>
    <property type="match status" value="1"/>
</dbReference>
<keyword id="KW-1185">Reference proteome</keyword>
<sequence>MAASAALSAAAAAAALSGLAVRLSRSAAARGSYGAFCKGLTRTLLTFFDLAWRLRMNFPYFYIVASVMLNVRLQVRIE</sequence>
<name>SIL2A_HUMAN</name>
<organism>
    <name type="scientific">Homo sapiens</name>
    <name type="common">Human</name>
    <dbReference type="NCBI Taxonomy" id="9606"/>
    <lineage>
        <taxon>Eukaryota</taxon>
        <taxon>Metazoa</taxon>
        <taxon>Chordata</taxon>
        <taxon>Craniata</taxon>
        <taxon>Vertebrata</taxon>
        <taxon>Euteleostomi</taxon>
        <taxon>Mammalia</taxon>
        <taxon>Eutheria</taxon>
        <taxon>Euarchontoglires</taxon>
        <taxon>Primates</taxon>
        <taxon>Haplorrhini</taxon>
        <taxon>Catarrhini</taxon>
        <taxon>Hominidae</taxon>
        <taxon>Homo</taxon>
    </lineage>
</organism>
<protein>
    <recommendedName>
        <fullName evidence="1">Small integral membrane protein 10-like protein 2A</fullName>
    </recommendedName>
</protein>